<protein>
    <recommendedName>
        <fullName evidence="11">Large ribosomal subunit protein bL12m</fullName>
    </recommendedName>
    <alternativeName>
        <fullName>39S ribosomal protein L12, mitochondrial</fullName>
        <shortName>L12mt</shortName>
        <shortName>MRP-L12</shortName>
    </alternativeName>
    <alternativeName>
        <fullName>5c5-2</fullName>
    </alternativeName>
    <component>
        <recommendedName>
            <fullName evidence="12">Large ribosomal subunit protein bL12m, long mature form</fullName>
        </recommendedName>
    </component>
    <component>
        <recommendedName>
            <fullName evidence="12">Large ribosomal subunit protein bL12m, short mature form</fullName>
        </recommendedName>
    </component>
</protein>
<name>RM12_HUMAN</name>
<evidence type="ECO:0000250" key="1">
    <source>
        <dbReference type="UniProtKB" id="Q9DB15"/>
    </source>
</evidence>
<evidence type="ECO:0000255" key="2"/>
<evidence type="ECO:0000269" key="3">
    <source>
    </source>
</evidence>
<evidence type="ECO:0000269" key="4">
    <source>
    </source>
</evidence>
<evidence type="ECO:0000269" key="5">
    <source>
    </source>
</evidence>
<evidence type="ECO:0000269" key="6">
    <source>
    </source>
</evidence>
<evidence type="ECO:0000269" key="7">
    <source>
    </source>
</evidence>
<evidence type="ECO:0000269" key="8">
    <source>
    </source>
</evidence>
<evidence type="ECO:0000269" key="9">
    <source>
    </source>
</evidence>
<evidence type="ECO:0000269" key="10">
    <source>
    </source>
</evidence>
<evidence type="ECO:0000303" key="11">
    <source>
    </source>
</evidence>
<evidence type="ECO:0000303" key="12">
    <source>
    </source>
</evidence>
<evidence type="ECO:0000305" key="13"/>
<evidence type="ECO:0000305" key="14">
    <source>
    </source>
</evidence>
<evidence type="ECO:0000305" key="15">
    <source>
    </source>
</evidence>
<feature type="transit peptide" description="Mitochondrion" evidence="2">
    <location>
        <begin position="1"/>
        <end position="36"/>
    </location>
</feature>
<feature type="chain" id="PRO_0000461649" description="Large ribosomal subunit protein bL12m, long mature form" evidence="15">
    <location>
        <begin position="37"/>
        <end position="198"/>
    </location>
</feature>
<feature type="chain" id="PRO_0000030458" description="Large ribosomal subunit protein bL12m, short mature form" evidence="15">
    <location>
        <begin position="45"/>
        <end position="198"/>
    </location>
</feature>
<feature type="modified residue" description="N6-acetyllysine" evidence="9">
    <location>
        <position position="125"/>
    </location>
</feature>
<feature type="modified residue" description="N6-acetyllysine" evidence="1">
    <location>
        <position position="138"/>
    </location>
</feature>
<feature type="modified residue" description="N6-acetyllysine" evidence="9">
    <location>
        <position position="142"/>
    </location>
</feature>
<feature type="modified residue" description="N6-acetyllysine" evidence="9">
    <location>
        <position position="144"/>
    </location>
</feature>
<feature type="modified residue" description="N6-acetyllysine; alternate" evidence="9">
    <location>
        <position position="150"/>
    </location>
</feature>
<feature type="modified residue" description="N6-succinyllysine; alternate" evidence="1">
    <location>
        <position position="150"/>
    </location>
</feature>
<feature type="modified residue" description="N6-succinyllysine" evidence="1">
    <location>
        <position position="162"/>
    </location>
</feature>
<feature type="modified residue" description="N6-acetyllysine" evidence="9">
    <location>
        <position position="163"/>
    </location>
</feature>
<feature type="modified residue" description="N6-acetyllysine" evidence="9">
    <location>
        <position position="173"/>
    </location>
</feature>
<feature type="modified residue" description="N6-acetyllysine; alternate" evidence="9">
    <location>
        <position position="178"/>
    </location>
</feature>
<feature type="modified residue" description="N6-succinyllysine; alternate" evidence="1">
    <location>
        <position position="178"/>
    </location>
</feature>
<feature type="modified residue" description="N6-acetyllysine" evidence="9">
    <location>
        <position position="185"/>
    </location>
</feature>
<feature type="cross-link" description="Glycyl lysine isopeptide (Lys-Gly) (interchain with G-Cter in ubiquitin)" evidence="8">
    <location>
        <position position="150"/>
    </location>
</feature>
<feature type="sequence variant" id="VAR_052001" description="In dbSNP:rs11546280.">
    <original>S</original>
    <variation>P</variation>
    <location>
        <position position="105"/>
    </location>
</feature>
<feature type="sequence variant" id="VAR_084463" description="In COXPD45; MRPL12 steady state level are reduced in patient fibroblasts; results in defective mt-LSU assembly; reduced mitochondrial translation with a significant decrease of synthesis of COXI, COXII and COXIII subunits; dbSNP:rs577290119." evidence="5">
    <original>A</original>
    <variation>V</variation>
    <location>
        <position position="181"/>
    </location>
</feature>
<feature type="mutagenesis site" description="No effect on promoter binding activity of POLRMT." evidence="9">
    <original>K</original>
    <variation>Q</variation>
    <variation>R</variation>
    <location>
        <position position="138"/>
    </location>
</feature>
<feature type="mutagenesis site" description="No effect on promoter binding activity of POLRMT." evidence="9">
    <original>K</original>
    <variation>Q</variation>
    <variation>R</variation>
    <location>
        <position position="142"/>
    </location>
</feature>
<feature type="mutagenesis site" description="No effect on promoter binding activity of POLRMT." evidence="9">
    <original>K</original>
    <variation>Q</variation>
    <variation>R</variation>
    <location>
        <position position="144"/>
    </location>
</feature>
<feature type="mutagenesis site" description="No effect on ubiquitination." evidence="8">
    <original>K</original>
    <variation>R</variation>
    <location>
        <position position="144"/>
    </location>
</feature>
<feature type="mutagenesis site" description="No effect on ubiquitination." evidence="8">
    <original>K</original>
    <variation>R</variation>
    <location>
        <position position="147"/>
    </location>
</feature>
<feature type="mutagenesis site" description="Reduced ubiquitination." evidence="8">
    <original>K</original>
    <variation>R</variation>
    <location>
        <position position="150"/>
    </location>
</feature>
<feature type="mutagenesis site" description="No effect on promoter binding activity of POLRMT." evidence="9">
    <original>K</original>
    <variation>Q</variation>
    <variation>R</variation>
    <location>
        <position position="163"/>
    </location>
</feature>
<feature type="mutagenesis site" description="No effect on promoter binding activity of POLRMT." evidence="9">
    <original>K</original>
    <variation>Q</variation>
    <location>
        <position position="173"/>
    </location>
</feature>
<feature type="mutagenesis site" description="Reduced promoter binding activity of POLRMT." evidence="9">
    <original>K</original>
    <variation>R</variation>
    <location>
        <position position="173"/>
    </location>
</feature>
<feature type="sequence conflict" description="In Ref. 1; CAA56249." evidence="13" ref="1">
    <original>A</original>
    <variation>T</variation>
    <location>
        <position position="33"/>
    </location>
</feature>
<dbReference type="EMBL" id="X79865">
    <property type="protein sequence ID" value="CAA56249.1"/>
    <property type="molecule type" value="mRNA"/>
</dbReference>
<dbReference type="EMBL" id="AF059736">
    <property type="protein sequence ID" value="AAG32154.1"/>
    <property type="molecule type" value="Genomic_DNA"/>
</dbReference>
<dbReference type="EMBL" id="BC002344">
    <property type="protein sequence ID" value="AAH02344.1"/>
    <property type="molecule type" value="mRNA"/>
</dbReference>
<dbReference type="EMBL" id="BC007497">
    <property type="protein sequence ID" value="AAH07497.1"/>
    <property type="molecule type" value="mRNA"/>
</dbReference>
<dbReference type="EMBL" id="AF105278">
    <property type="protein sequence ID" value="AAD16894.1"/>
    <property type="status" value="ALT_FRAME"/>
    <property type="molecule type" value="mRNA"/>
</dbReference>
<dbReference type="CCDS" id="CCDS11785.1"/>
<dbReference type="RefSeq" id="NP_002940.2">
    <property type="nucleotide sequence ID" value="NM_002949.3"/>
</dbReference>
<dbReference type="PDB" id="6VLZ">
    <property type="method" value="EM"/>
    <property type="resolution" value="2.97 A"/>
    <property type="chains" value="TA/TB/TC=1-198"/>
</dbReference>
<dbReference type="PDB" id="6VMI">
    <property type="method" value="EM"/>
    <property type="resolution" value="2.96 A"/>
    <property type="chains" value="TA/TB/TC=1-198"/>
</dbReference>
<dbReference type="PDB" id="6ZM5">
    <property type="method" value="EM"/>
    <property type="resolution" value="2.89 A"/>
    <property type="chains" value="t1/t2/t3/t4/t5/t6=1-198"/>
</dbReference>
<dbReference type="PDB" id="6ZM6">
    <property type="method" value="EM"/>
    <property type="resolution" value="2.59 A"/>
    <property type="chains" value="t1/t2/t3/t4/t5/t6=1-198"/>
</dbReference>
<dbReference type="PDB" id="6ZS9">
    <property type="method" value="EM"/>
    <property type="resolution" value="4.00 A"/>
    <property type="chains" value="t1/t2/t3/t4/t5/t6=1-198"/>
</dbReference>
<dbReference type="PDB" id="6ZSA">
    <property type="method" value="EM"/>
    <property type="resolution" value="4.00 A"/>
    <property type="chains" value="t1/t2/t3/t4/t5/t6=1-198"/>
</dbReference>
<dbReference type="PDB" id="6ZSB">
    <property type="method" value="EM"/>
    <property type="resolution" value="4.50 A"/>
    <property type="chains" value="t1/t2/t3/t4/t5/t6=1-198"/>
</dbReference>
<dbReference type="PDB" id="6ZSC">
    <property type="method" value="EM"/>
    <property type="resolution" value="3.50 A"/>
    <property type="chains" value="t1/t2/t3/t4/t5/t6=1-198"/>
</dbReference>
<dbReference type="PDB" id="6ZSD">
    <property type="method" value="EM"/>
    <property type="resolution" value="3.70 A"/>
    <property type="chains" value="t1/t2/t3/t4/t5/t6=1-198"/>
</dbReference>
<dbReference type="PDB" id="6ZSE">
    <property type="method" value="EM"/>
    <property type="resolution" value="5.00 A"/>
    <property type="chains" value="t1/t2/t3/t4/t5/t6=1-198"/>
</dbReference>
<dbReference type="PDB" id="6ZSG">
    <property type="method" value="EM"/>
    <property type="resolution" value="4.00 A"/>
    <property type="chains" value="t1/t2/t3/t4/t5/t6=1-198"/>
</dbReference>
<dbReference type="PDB" id="7L08">
    <property type="method" value="EM"/>
    <property type="resolution" value="3.49 A"/>
    <property type="chains" value="TA/TB=1-198"/>
</dbReference>
<dbReference type="PDB" id="7L20">
    <property type="method" value="EM"/>
    <property type="resolution" value="3.15 A"/>
    <property type="chains" value="TA/TB/TC=1-198"/>
</dbReference>
<dbReference type="PDB" id="7O9K">
    <property type="method" value="EM"/>
    <property type="resolution" value="3.10 A"/>
    <property type="chains" value="FF/t1/t2/t3/t4/t5/t6=1-198"/>
</dbReference>
<dbReference type="PDB" id="7O9M">
    <property type="method" value="EM"/>
    <property type="resolution" value="2.50 A"/>
    <property type="chains" value="t1/t2/t3/t4/t5/t6=1-198"/>
</dbReference>
<dbReference type="PDB" id="7OG4">
    <property type="method" value="EM"/>
    <property type="resolution" value="3.80 A"/>
    <property type="chains" value="t1/t2/t3/t4/t5/t6=1-198"/>
</dbReference>
<dbReference type="PDB" id="7PO2">
    <property type="method" value="EM"/>
    <property type="resolution" value="3.09 A"/>
    <property type="chains" value="t=1-198"/>
</dbReference>
<dbReference type="PDB" id="7PO4">
    <property type="method" value="EM"/>
    <property type="resolution" value="2.56 A"/>
    <property type="chains" value="t/u/v/w/x/y=1-198"/>
</dbReference>
<dbReference type="PDB" id="7QI4">
    <property type="method" value="EM"/>
    <property type="resolution" value="2.21 A"/>
    <property type="chains" value="t/u/v/w/x/y=1-198"/>
</dbReference>
<dbReference type="PDB" id="7QI5">
    <property type="method" value="EM"/>
    <property type="resolution" value="2.63 A"/>
    <property type="chains" value="t/u/v/w/x/y=1-198"/>
</dbReference>
<dbReference type="PDB" id="7QI6">
    <property type="method" value="EM"/>
    <property type="resolution" value="2.98 A"/>
    <property type="chains" value="t/u/v/w/x/y=1-198"/>
</dbReference>
<dbReference type="PDB" id="8ANY">
    <property type="method" value="EM"/>
    <property type="resolution" value="2.85 A"/>
    <property type="chains" value="t/u/v/w/x/y=1-198"/>
</dbReference>
<dbReference type="PDB" id="8OIR">
    <property type="method" value="EM"/>
    <property type="resolution" value="3.10 A"/>
    <property type="chains" value="B1/B2/B3/B4/B5/B6=1-198"/>
</dbReference>
<dbReference type="PDB" id="8OIT">
    <property type="method" value="EM"/>
    <property type="resolution" value="2.90 A"/>
    <property type="chains" value="B1/B2/B3/B4/B5/B6=1-198"/>
</dbReference>
<dbReference type="PDBsum" id="6VLZ"/>
<dbReference type="PDBsum" id="6VMI"/>
<dbReference type="PDBsum" id="6ZM5"/>
<dbReference type="PDBsum" id="6ZM6"/>
<dbReference type="PDBsum" id="6ZS9"/>
<dbReference type="PDBsum" id="6ZSA"/>
<dbReference type="PDBsum" id="6ZSB"/>
<dbReference type="PDBsum" id="6ZSC"/>
<dbReference type="PDBsum" id="6ZSD"/>
<dbReference type="PDBsum" id="6ZSE"/>
<dbReference type="PDBsum" id="6ZSG"/>
<dbReference type="PDBsum" id="7L08"/>
<dbReference type="PDBsum" id="7L20"/>
<dbReference type="PDBsum" id="7O9K"/>
<dbReference type="PDBsum" id="7O9M"/>
<dbReference type="PDBsum" id="7OG4"/>
<dbReference type="PDBsum" id="7PO2"/>
<dbReference type="PDBsum" id="7PO4"/>
<dbReference type="PDBsum" id="7QI4"/>
<dbReference type="PDBsum" id="7QI5"/>
<dbReference type="PDBsum" id="7QI6"/>
<dbReference type="PDBsum" id="8ANY"/>
<dbReference type="PDBsum" id="8OIR"/>
<dbReference type="PDBsum" id="8OIT"/>
<dbReference type="EMDB" id="EMD-11278"/>
<dbReference type="EMDB" id="EMD-11279"/>
<dbReference type="EMDB" id="EMD-11390"/>
<dbReference type="EMDB" id="EMD-11391"/>
<dbReference type="EMDB" id="EMD-11392"/>
<dbReference type="EMDB" id="EMD-11393"/>
<dbReference type="EMDB" id="EMD-11394"/>
<dbReference type="EMDB" id="EMD-11395"/>
<dbReference type="EMDB" id="EMD-11397"/>
<dbReference type="EMDB" id="EMD-12763"/>
<dbReference type="EMDB" id="EMD-12764"/>
<dbReference type="EMDB" id="EMD-12877"/>
<dbReference type="EMDB" id="EMD-13560"/>
<dbReference type="EMDB" id="EMD-13562"/>
<dbReference type="EMDB" id="EMD-13980"/>
<dbReference type="EMDB" id="EMD-13981"/>
<dbReference type="EMDB" id="EMD-13982"/>
<dbReference type="EMDB" id="EMD-15544"/>
<dbReference type="EMDB" id="EMD-16897"/>
<dbReference type="EMDB" id="EMD-16899"/>
<dbReference type="EMDB" id="EMD-21233"/>
<dbReference type="EMDB" id="EMD-21242"/>
<dbReference type="EMDB" id="EMD-23096"/>
<dbReference type="EMDB" id="EMD-23121"/>
<dbReference type="SMR" id="P52815"/>
<dbReference type="BioGRID" id="112097">
    <property type="interactions" value="360"/>
</dbReference>
<dbReference type="ComplexPortal" id="CPX-5226">
    <property type="entry name" value="39S mitochondrial large ribosomal subunit"/>
</dbReference>
<dbReference type="CORUM" id="P52815"/>
<dbReference type="DIP" id="DIP-50865N"/>
<dbReference type="FunCoup" id="P52815">
    <property type="interactions" value="1525"/>
</dbReference>
<dbReference type="IntAct" id="P52815">
    <property type="interactions" value="214"/>
</dbReference>
<dbReference type="MINT" id="P52815"/>
<dbReference type="STRING" id="9606.ENSP00000333837"/>
<dbReference type="ChEMBL" id="CHEMBL4295780"/>
<dbReference type="iPTMnet" id="P52815"/>
<dbReference type="PhosphoSitePlus" id="P52815"/>
<dbReference type="SwissPalm" id="P52815"/>
<dbReference type="BioMuta" id="MRPL12"/>
<dbReference type="DMDM" id="20981709"/>
<dbReference type="jPOST" id="P52815"/>
<dbReference type="MassIVE" id="P52815"/>
<dbReference type="PaxDb" id="9606-ENSP00000333837"/>
<dbReference type="PeptideAtlas" id="P52815"/>
<dbReference type="ProteomicsDB" id="56540"/>
<dbReference type="Pumba" id="P52815"/>
<dbReference type="TopDownProteomics" id="P52815"/>
<dbReference type="Antibodypedia" id="60242">
    <property type="antibodies" value="237 antibodies from 30 providers"/>
</dbReference>
<dbReference type="DNASU" id="6182"/>
<dbReference type="Ensembl" id="ENST00000333676.8">
    <property type="protein sequence ID" value="ENSP00000333837.3"/>
    <property type="gene ID" value="ENSG00000262814.8"/>
</dbReference>
<dbReference type="GeneID" id="6182"/>
<dbReference type="KEGG" id="hsa:6182"/>
<dbReference type="MANE-Select" id="ENST00000333676.8">
    <property type="protein sequence ID" value="ENSP00000333837.3"/>
    <property type="RefSeq nucleotide sequence ID" value="NM_002949.4"/>
    <property type="RefSeq protein sequence ID" value="NP_002940.2"/>
</dbReference>
<dbReference type="UCSC" id="uc002kbh.3">
    <property type="organism name" value="human"/>
</dbReference>
<dbReference type="AGR" id="HGNC:10378"/>
<dbReference type="CTD" id="6182"/>
<dbReference type="DisGeNET" id="6182"/>
<dbReference type="GeneCards" id="MRPL12"/>
<dbReference type="HGNC" id="HGNC:10378">
    <property type="gene designation" value="MRPL12"/>
</dbReference>
<dbReference type="HPA" id="ENSG00000262814">
    <property type="expression patterns" value="Low tissue specificity"/>
</dbReference>
<dbReference type="MalaCards" id="MRPL12"/>
<dbReference type="MIM" id="602375">
    <property type="type" value="gene"/>
</dbReference>
<dbReference type="MIM" id="618951">
    <property type="type" value="phenotype"/>
</dbReference>
<dbReference type="neXtProt" id="NX_P52815"/>
<dbReference type="OpenTargets" id="ENSG00000262814"/>
<dbReference type="PharmGKB" id="PA30941"/>
<dbReference type="VEuPathDB" id="HostDB:ENSG00000262814"/>
<dbReference type="eggNOG" id="KOG1715">
    <property type="taxonomic scope" value="Eukaryota"/>
</dbReference>
<dbReference type="GeneTree" id="ENSGT00390000000190"/>
<dbReference type="HOGENOM" id="CLU_086499_0_2_1"/>
<dbReference type="InParanoid" id="P52815"/>
<dbReference type="OMA" id="LEDKWGV"/>
<dbReference type="OrthoDB" id="250175at2759"/>
<dbReference type="PAN-GO" id="P52815">
    <property type="GO annotations" value="4 GO annotations based on evolutionary models"/>
</dbReference>
<dbReference type="PhylomeDB" id="P52815"/>
<dbReference type="TreeFam" id="TF105997"/>
<dbReference type="PathwayCommons" id="P52815"/>
<dbReference type="Reactome" id="R-HSA-5368286">
    <property type="pathway name" value="Mitochondrial translation initiation"/>
</dbReference>
<dbReference type="Reactome" id="R-HSA-5389840">
    <property type="pathway name" value="Mitochondrial translation elongation"/>
</dbReference>
<dbReference type="Reactome" id="R-HSA-5419276">
    <property type="pathway name" value="Mitochondrial translation termination"/>
</dbReference>
<dbReference type="Reactome" id="R-HSA-9837999">
    <property type="pathway name" value="Mitochondrial protein degradation"/>
</dbReference>
<dbReference type="SignaLink" id="P52815"/>
<dbReference type="SIGNOR" id="P52815"/>
<dbReference type="BioGRID-ORCS" id="6182">
    <property type="hits" value="454 hits in 1139 CRISPR screens"/>
</dbReference>
<dbReference type="CD-CODE" id="91857CE7">
    <property type="entry name" value="Nucleolus"/>
</dbReference>
<dbReference type="ChiTaRS" id="MRPL12">
    <property type="organism name" value="human"/>
</dbReference>
<dbReference type="GeneWiki" id="MRPL12"/>
<dbReference type="GenomeRNAi" id="6182"/>
<dbReference type="Pharos" id="P52815">
    <property type="development level" value="Tbio"/>
</dbReference>
<dbReference type="PRO" id="PR:P52815"/>
<dbReference type="Proteomes" id="UP000005640">
    <property type="component" value="Chromosome 17"/>
</dbReference>
<dbReference type="RNAct" id="P52815">
    <property type="molecule type" value="protein"/>
</dbReference>
<dbReference type="Bgee" id="ENSG00000262814">
    <property type="expression patterns" value="Expressed in apex of heart and 111 other cell types or tissues"/>
</dbReference>
<dbReference type="GO" id="GO:0005743">
    <property type="term" value="C:mitochondrial inner membrane"/>
    <property type="evidence" value="ECO:0000304"/>
    <property type="project" value="Reactome"/>
</dbReference>
<dbReference type="GO" id="GO:0005762">
    <property type="term" value="C:mitochondrial large ribosomal subunit"/>
    <property type="evidence" value="ECO:0000314"/>
    <property type="project" value="UniProtKB"/>
</dbReference>
<dbReference type="GO" id="GO:0005759">
    <property type="term" value="C:mitochondrial matrix"/>
    <property type="evidence" value="ECO:0000314"/>
    <property type="project" value="UniProtKB"/>
</dbReference>
<dbReference type="GO" id="GO:0005739">
    <property type="term" value="C:mitochondrion"/>
    <property type="evidence" value="ECO:0000314"/>
    <property type="project" value="HGNC-UCL"/>
</dbReference>
<dbReference type="GO" id="GO:0003729">
    <property type="term" value="F:mRNA binding"/>
    <property type="evidence" value="ECO:0000318"/>
    <property type="project" value="GO_Central"/>
</dbReference>
<dbReference type="GO" id="GO:0003723">
    <property type="term" value="F:RNA binding"/>
    <property type="evidence" value="ECO:0000304"/>
    <property type="project" value="ProtInc"/>
</dbReference>
<dbReference type="GO" id="GO:0003735">
    <property type="term" value="F:structural constituent of ribosome"/>
    <property type="evidence" value="ECO:0000318"/>
    <property type="project" value="GO_Central"/>
</dbReference>
<dbReference type="GO" id="GO:0006390">
    <property type="term" value="P:mitochondrial transcription"/>
    <property type="evidence" value="ECO:0000314"/>
    <property type="project" value="HGNC-UCL"/>
</dbReference>
<dbReference type="GO" id="GO:0032543">
    <property type="term" value="P:mitochondrial translation"/>
    <property type="evidence" value="ECO:0000303"/>
    <property type="project" value="ComplexPortal"/>
</dbReference>
<dbReference type="GO" id="GO:0045893">
    <property type="term" value="P:positive regulation of DNA-templated transcription"/>
    <property type="evidence" value="ECO:0000314"/>
    <property type="project" value="HGNC-UCL"/>
</dbReference>
<dbReference type="GO" id="GO:0006412">
    <property type="term" value="P:translation"/>
    <property type="evidence" value="ECO:0000318"/>
    <property type="project" value="GO_Central"/>
</dbReference>
<dbReference type="FunFam" id="1.20.5.710:FF:000006">
    <property type="entry name" value="39S ribosomal protein L12, mitochondrial"/>
    <property type="match status" value="1"/>
</dbReference>
<dbReference type="FunFam" id="3.30.1390.10:FF:000001">
    <property type="entry name" value="50S ribosomal protein L7/L12"/>
    <property type="match status" value="1"/>
</dbReference>
<dbReference type="Gene3D" id="3.30.1390.10">
    <property type="match status" value="1"/>
</dbReference>
<dbReference type="Gene3D" id="1.20.5.710">
    <property type="entry name" value="Single helix bin"/>
    <property type="match status" value="1"/>
</dbReference>
<dbReference type="HAMAP" id="MF_00368">
    <property type="entry name" value="Ribosomal_bL12"/>
    <property type="match status" value="1"/>
</dbReference>
<dbReference type="InterPro" id="IPR000206">
    <property type="entry name" value="Ribosomal_bL12"/>
</dbReference>
<dbReference type="InterPro" id="IPR013823">
    <property type="entry name" value="Ribosomal_bL12_C"/>
</dbReference>
<dbReference type="InterPro" id="IPR014719">
    <property type="entry name" value="Ribosomal_bL12_C/ClpS-like"/>
</dbReference>
<dbReference type="InterPro" id="IPR008932">
    <property type="entry name" value="Ribosomal_bL12_oligo"/>
</dbReference>
<dbReference type="InterPro" id="IPR036235">
    <property type="entry name" value="Ribosomal_bL12_oligo_N_sf"/>
</dbReference>
<dbReference type="PANTHER" id="PTHR45987">
    <property type="entry name" value="39S RIBOSOMAL PROTEIN L12"/>
    <property type="match status" value="1"/>
</dbReference>
<dbReference type="PANTHER" id="PTHR45987:SF4">
    <property type="entry name" value="LARGE RIBOSOMAL SUBUNIT PROTEIN BL12M"/>
    <property type="match status" value="1"/>
</dbReference>
<dbReference type="Pfam" id="PF00542">
    <property type="entry name" value="Ribosomal_L12"/>
    <property type="match status" value="1"/>
</dbReference>
<dbReference type="Pfam" id="PF16320">
    <property type="entry name" value="Ribosomal_L12_N"/>
    <property type="match status" value="1"/>
</dbReference>
<dbReference type="SUPFAM" id="SSF54736">
    <property type="entry name" value="ClpS-like"/>
    <property type="match status" value="1"/>
</dbReference>
<dbReference type="SUPFAM" id="SSF48300">
    <property type="entry name" value="Ribosomal protein L7/12, oligomerisation (N-terminal) domain"/>
    <property type="match status" value="1"/>
</dbReference>
<keyword id="KW-0002">3D-structure</keyword>
<keyword id="KW-0007">Acetylation</keyword>
<keyword id="KW-0903">Direct protein sequencing</keyword>
<keyword id="KW-0225">Disease variant</keyword>
<keyword id="KW-1017">Isopeptide bond</keyword>
<keyword id="KW-0496">Mitochondrion</keyword>
<keyword id="KW-1274">Primary mitochondrial disease</keyword>
<keyword id="KW-1267">Proteomics identification</keyword>
<keyword id="KW-1185">Reference proteome</keyword>
<keyword id="KW-0687">Ribonucleoprotein</keyword>
<keyword id="KW-0689">Ribosomal protein</keyword>
<keyword id="KW-0809">Transit peptide</keyword>
<keyword id="KW-0832">Ubl conjugation</keyword>
<gene>
    <name type="primary">MRPL12</name>
    <name type="synonym">MRPL7</name>
    <name type="synonym">RPML12</name>
</gene>
<organism>
    <name type="scientific">Homo sapiens</name>
    <name type="common">Human</name>
    <dbReference type="NCBI Taxonomy" id="9606"/>
    <lineage>
        <taxon>Eukaryota</taxon>
        <taxon>Metazoa</taxon>
        <taxon>Chordata</taxon>
        <taxon>Craniata</taxon>
        <taxon>Vertebrata</taxon>
        <taxon>Euteleostomi</taxon>
        <taxon>Mammalia</taxon>
        <taxon>Eutheria</taxon>
        <taxon>Euarchontoglires</taxon>
        <taxon>Primates</taxon>
        <taxon>Haplorrhini</taxon>
        <taxon>Catarrhini</taxon>
        <taxon>Hominidae</taxon>
        <taxon>Homo</taxon>
    </lineage>
</organism>
<accession>P52815</accession>
<accession>Q969U0</accession>
<accession>Q9HCA2</accession>
<accession>Q9UQJ3</accession>
<reference key="1">
    <citation type="journal article" date="1996" name="J. Biol. Chem.">
        <title>A delayed-early response nuclear gene encoding MRPL12, the mitochondrial homologue to the bacterial translational regulator L7/L12 protein.</title>
        <authorList>
            <person name="Marty L."/>
            <person name="Fort P."/>
        </authorList>
    </citation>
    <scope>NUCLEOTIDE SEQUENCE [MRNA]</scope>
    <scope>SUBUNIT</scope>
    <scope>SUBCELLULAR LOCATION</scope>
</reference>
<reference key="2">
    <citation type="submission" date="1998-04" db="EMBL/GenBank/DDBJ databases">
        <title>Genomic structure and chromosomal localization of human mitochondrial ribosomal protein L12.</title>
        <authorList>
            <person name="Liu J."/>
            <person name="Barnoski B.L."/>
            <person name="O'Brien T.W."/>
        </authorList>
    </citation>
    <scope>NUCLEOTIDE SEQUENCE [GENOMIC DNA]</scope>
</reference>
<reference key="3">
    <citation type="journal article" date="2004" name="Genome Res.">
        <title>The status, quality, and expansion of the NIH full-length cDNA project: the Mammalian Gene Collection (MGC).</title>
        <authorList>
            <consortium name="The MGC Project Team"/>
        </authorList>
    </citation>
    <scope>NUCLEOTIDE SEQUENCE [LARGE SCALE MRNA]</scope>
    <source>
        <tissue>Muscle</tissue>
    </source>
</reference>
<reference key="4">
    <citation type="submission" date="1998-11" db="EMBL/GenBank/DDBJ databases">
        <authorList>
            <person name="Ma F.-R."/>
            <person name="Yan M."/>
            <person name="Zhu L.-P."/>
        </authorList>
    </citation>
    <scope>NUCLEOTIDE SEQUENCE [MRNA] OF 47-198</scope>
</reference>
<reference key="5">
    <citation type="journal article" date="2016" name="J. Biol. Chem.">
        <title>Mitochondrial Ribosomal Protein L12 Is Required for POLRMT Stability and Exists as Two Forms Generated by Alternative Proteolysis during Import.</title>
        <authorList>
            <person name="Nouws J."/>
            <person name="Goswami A.V."/>
            <person name="Bestwick M."/>
            <person name="McCann B.J."/>
            <person name="Surovtseva Y.V."/>
            <person name="Shadel G.S."/>
        </authorList>
    </citation>
    <scope>PROTEIN SEQUENCE OF 45-49</scope>
    <scope>FUNCTION</scope>
    <scope>PROTEOLYTIC CLEAVAGE</scope>
</reference>
<reference key="6">
    <citation type="journal article" date="2009" name="J. Biol. Chem.">
        <title>hNOA1 interacts with complex I and DAP3 and regulates mitochondrial respiration and apoptosis.</title>
        <authorList>
            <person name="Tang T."/>
            <person name="Zheng B."/>
            <person name="Chen S.H."/>
            <person name="Murphy A.N."/>
            <person name="Kudlicka K."/>
            <person name="Zhou H."/>
            <person name="Farquhar M.G."/>
        </authorList>
    </citation>
    <scope>INTERACTION WITH NOA1</scope>
</reference>
<reference key="7">
    <citation type="journal article" date="2011" name="BMC Syst. Biol.">
        <title>Initial characterization of the human central proteome.</title>
        <authorList>
            <person name="Burkard T.R."/>
            <person name="Planyavsky M."/>
            <person name="Kaupe I."/>
            <person name="Breitwieser F.P."/>
            <person name="Buerckstuemmer T."/>
            <person name="Bennett K.L."/>
            <person name="Superti-Furga G."/>
            <person name="Colinge J."/>
        </authorList>
    </citation>
    <scope>IDENTIFICATION BY MASS SPECTROMETRY [LARGE SCALE ANALYSIS]</scope>
</reference>
<reference key="8">
    <citation type="journal article" date="2011" name="Proc. Natl. Acad. Sci. U.S.A.">
        <title>Mitochondrial ribosomal protein L12 selectively associates with human mitochondrial RNA polymerase to activate transcription.</title>
        <authorList>
            <person name="Surovtseva Y.V."/>
            <person name="Shutt T.E."/>
            <person name="Cotney J."/>
            <person name="Cimen H."/>
            <person name="Chen S.Y."/>
            <person name="Koc E.C."/>
            <person name="Shadel G.S."/>
        </authorList>
    </citation>
    <scope>FUNCTION</scope>
</reference>
<reference key="9">
    <citation type="journal article" date="2013" name="Biochim. Biophys. Acta">
        <title>Mutations in mitochondrial ribosomal protein MRPL12 leads to growth retardation, neurological deterioration and mitochondrial translation deficiency.</title>
        <authorList>
            <person name="Serre V."/>
            <person name="Rozanska A."/>
            <person name="Beinat M."/>
            <person name="Chretien D."/>
            <person name="Boddaert N."/>
            <person name="Munnich A."/>
            <person name="Roetig A."/>
            <person name="Chrzanowska-Lightowlers Z.M."/>
        </authorList>
    </citation>
    <scope>FUNCTION</scope>
    <scope>INVOLVEMENT IN COXPD45</scope>
    <scope>VARIANT COXPD45 VAL-181</scope>
    <scope>CHARACTERIZATION OF VARIANT COXPD45 VAL-181</scope>
</reference>
<reference key="10">
    <citation type="journal article" date="2014" name="Science">
        <title>Structure of the large ribosomal subunit from human mitochondria.</title>
        <authorList>
            <person name="Brown A."/>
            <person name="Amunts A."/>
            <person name="Bai X.C."/>
            <person name="Sugimoto Y."/>
            <person name="Edwards P.C."/>
            <person name="Murshudov G."/>
            <person name="Scheres S.H."/>
            <person name="Ramakrishnan V."/>
        </authorList>
    </citation>
    <scope>NOMENCLATURE</scope>
</reference>
<reference key="11">
    <citation type="journal article" date="2015" name="Proteomics">
        <title>N-terminome analysis of the human mitochondrial proteome.</title>
        <authorList>
            <person name="Vaca Jacome A.S."/>
            <person name="Rabilloud T."/>
            <person name="Schaeffer-Reiss C."/>
            <person name="Rompais M."/>
            <person name="Ayoub D."/>
            <person name="Lane L."/>
            <person name="Bairoch A."/>
            <person name="Van Dorsselaer A."/>
            <person name="Carapito C."/>
        </authorList>
    </citation>
    <scope>IDENTIFICATION BY MASS SPECTROMETRY [LARGE SCALE ANALYSIS]</scope>
</reference>
<reference key="12">
    <citation type="journal article" date="2016" name="Cell Rep.">
        <title>APEX Fingerprinting Reveals the Subcellular Localization of Proteins of Interest.</title>
        <authorList>
            <person name="Lee S.Y."/>
            <person name="Kang M.G."/>
            <person name="Park J.S."/>
            <person name="Lee G."/>
            <person name="Ting A.Y."/>
            <person name="Rhee H.W."/>
        </authorList>
    </citation>
    <scope>SUBCELLULAR LOCATION</scope>
</reference>
<reference key="13">
    <citation type="journal article" date="2023" name="FEBS J.">
        <title>CUL3 induces mitochondrial dysfunction via MRPL12 ubiquitination in renal tubular epithelial cells.</title>
        <authorList>
            <person name="Ji X."/>
            <person name="Yang X."/>
            <person name="Gu X."/>
            <person name="Chu L."/>
            <person name="Sun S."/>
            <person name="Sun J."/>
            <person name="Song P."/>
            <person name="Mu Q."/>
            <person name="Wang Y."/>
            <person name="Sun X."/>
            <person name="Su D."/>
            <person name="Su T."/>
            <person name="Hou S."/>
            <person name="Lu Y."/>
            <person name="Ma C."/>
            <person name="Liu M."/>
            <person name="Zhang T."/>
            <person name="Zhang W."/>
            <person name="Liu Y."/>
            <person name="Wan Q."/>
        </authorList>
    </citation>
    <scope>UBIQUITINATION AT LYS-150</scope>
    <scope>MUTAGENESIS OF LYS-144; LYS-147 AND LYS-150</scope>
</reference>
<reference key="14">
    <citation type="journal article" date="2024" name="Proteins">
        <title>The role of lysine acetylation in the function of mitochondrial ribosomal protein L12.</title>
        <authorList>
            <person name="Paluch K.V."/>
            <person name="Platz K.R."/>
            <person name="Rudisel E.J."/>
            <person name="Erdmann R.R."/>
            <person name="Laurin T.R."/>
            <person name="Dittenhafer-Reed K.E."/>
        </authorList>
    </citation>
    <scope>ACETYLATION AT LYS-125; LYS-142; LYS-144; LYS-150; LYS-163; LYS-173; LYS-178 AND LYS-185</scope>
    <scope>MUTAGENESIS OF LYS-138; LYS-142; LYS-144; LYS-163 AND LYS-173</scope>
</reference>
<comment type="function">
    <text evidence="4 5 6">As a component of the mitochondrial large ribosomal subunit, plays a role in mitochondrial translation (PubMed:23603806). When present in mitochondria as a free protein not associated with the ribosome, associates with mitochondrial RNA polymerase POLRMT to activate transcription (PubMed:22003127). Required for POLRMT stability (PubMed:26586915).</text>
</comment>
<comment type="subunit">
    <text evidence="3 10 14">Component of the mitochondrial large ribosomal subunit (mt-LSU) (PubMed:8626705). Mature mammalian 55S mitochondrial ribosomes consist of a small (28S) and a large (39S) subunit. The 28S small subunit contains a 12S ribosomal RNA (12S mt-rRNA) and 30 different proteins. The 39S large subunit contains a 16S rRNA (16S mt-rRNA), a copy of mitochondrial valine transfer RNA (mt-tRNA(Val)), which plays an integral structural role, and 52 different proteins (Probable). bL12m interacts with NOA1 (PubMed:19103604).</text>
</comment>
<comment type="interaction">
    <interactant intactId="EBI-358272">
        <id>P52815</id>
    </interactant>
    <interactant intactId="EBI-78176">
        <id>Q13185</id>
        <label>CBX3</label>
    </interactant>
    <organismsDiffer>false</organismsDiffer>
    <experiments>3</experiments>
</comment>
<comment type="interaction">
    <interactant intactId="EBI-358272">
        <id>P52815</id>
    </interactant>
    <interactant intactId="EBI-13317131">
        <id>Q5VUJ9-2</id>
        <label>EFCAB2</label>
    </interactant>
    <organismsDiffer>false</organismsDiffer>
    <experiments>3</experiments>
</comment>
<comment type="interaction">
    <interactant intactId="EBI-358272">
        <id>P52815</id>
    </interactant>
    <interactant intactId="EBI-743414">
        <id>O95967</id>
        <label>EFEMP2</label>
    </interactant>
    <organismsDiffer>false</organismsDiffer>
    <experiments>3</experiments>
</comment>
<comment type="interaction">
    <interactant intactId="EBI-358272">
        <id>P52815</id>
    </interactant>
    <interactant intactId="EBI-14890134">
        <id>Q2M3D2</id>
        <label>EXOC3L2</label>
    </interactant>
    <organismsDiffer>false</organismsDiffer>
    <experiments>3</experiments>
</comment>
<comment type="interaction">
    <interactant intactId="EBI-358272">
        <id>P52815</id>
    </interactant>
    <interactant intactId="EBI-11956479">
        <id>P23142-4</id>
        <label>FBLN1</label>
    </interactant>
    <organismsDiffer>false</organismsDiffer>
    <experiments>3</experiments>
</comment>
<comment type="interaction">
    <interactant intactId="EBI-358272">
        <id>P52815</id>
    </interactant>
    <interactant intactId="EBI-726739">
        <id>Q9UPY8</id>
        <label>MAPRE3</label>
    </interactant>
    <organismsDiffer>false</organismsDiffer>
    <experiments>3</experiments>
</comment>
<comment type="interaction">
    <interactant intactId="EBI-358272">
        <id>P52815</id>
    </interactant>
    <interactant intactId="EBI-10288852">
        <id>Q9UBU8-2</id>
        <label>MORF4L1</label>
    </interactant>
    <organismsDiffer>false</organismsDiffer>
    <experiments>3</experiments>
</comment>
<comment type="interaction">
    <interactant intactId="EBI-358272">
        <id>P52815</id>
    </interactant>
    <interactant intactId="EBI-399257">
        <id>Q15014</id>
        <label>MORF4L2</label>
    </interactant>
    <organismsDiffer>false</organismsDiffer>
    <experiments>3</experiments>
</comment>
<comment type="interaction">
    <interactant intactId="EBI-358272">
        <id>P52815</id>
    </interactant>
    <interactant intactId="EBI-12135485">
        <id>P41271-2</id>
        <label>NBL1</label>
    </interactant>
    <organismsDiffer>false</organismsDiffer>
    <experiments>3</experiments>
</comment>
<comment type="interaction">
    <interactant intactId="EBI-358272">
        <id>P52815</id>
    </interactant>
    <interactant intactId="EBI-741158">
        <id>Q96HA8</id>
        <label>NTAQ1</label>
    </interactant>
    <organismsDiffer>false</organismsDiffer>
    <experiments>3</experiments>
</comment>
<comment type="interaction">
    <interactant intactId="EBI-358272">
        <id>P52815</id>
    </interactant>
    <interactant intactId="EBI-12027160">
        <id>Q9P121-3</id>
        <label>NTM</label>
    </interactant>
    <organismsDiffer>false</organismsDiffer>
    <experiments>3</experiments>
</comment>
<comment type="interaction">
    <interactant intactId="EBI-358272">
        <id>P52815</id>
    </interactant>
    <interactant intactId="EBI-355145">
        <id>O00411</id>
        <label>POLRMT</label>
    </interactant>
    <organismsDiffer>false</organismsDiffer>
    <experiments>7</experiments>
</comment>
<comment type="interaction">
    <interactant intactId="EBI-358272">
        <id>P52815</id>
    </interactant>
    <interactant intactId="EBI-710402">
        <id>Q96I34</id>
        <label>PPP1R16A</label>
    </interactant>
    <organismsDiffer>false</organismsDiffer>
    <experiments>3</experiments>
</comment>
<comment type="interaction">
    <interactant intactId="EBI-358272">
        <id>P52815</id>
    </interactant>
    <interactant intactId="EBI-711613">
        <id>P21673</id>
        <label>SAT1</label>
    </interactant>
    <organismsDiffer>false</organismsDiffer>
    <experiments>3</experiments>
</comment>
<comment type="interaction">
    <interactant intactId="EBI-358272">
        <id>P52815</id>
    </interactant>
    <interactant intactId="EBI-693002">
        <id>Q8WYJ6</id>
        <label>SEPTIN1</label>
    </interactant>
    <organismsDiffer>false</organismsDiffer>
    <experiments>3</experiments>
</comment>
<comment type="interaction">
    <interactant intactId="EBI-358272">
        <id>P52815</id>
    </interactant>
    <interactant intactId="EBI-10262539">
        <id>Q8IWR1</id>
        <label>TRIM59</label>
    </interactant>
    <organismsDiffer>false</organismsDiffer>
    <experiments>3</experiments>
</comment>
<comment type="interaction">
    <interactant intactId="EBI-358272">
        <id>P52815</id>
    </interactant>
    <interactant intactId="EBI-707554">
        <id>O14530</id>
        <label>TXNDC9</label>
    </interactant>
    <organismsDiffer>false</organismsDiffer>
    <experiments>3</experiments>
</comment>
<comment type="interaction">
    <interactant intactId="EBI-358272">
        <id>P52815</id>
    </interactant>
    <interactant intactId="EBI-7254550">
        <id>P36508</id>
        <label>ZNF76</label>
    </interactant>
    <organismsDiffer>false</organismsDiffer>
    <experiments>3</experiments>
</comment>
<comment type="subcellular location">
    <subcellularLocation>
        <location evidence="7 10">Mitochondrion matrix</location>
    </subcellularLocation>
</comment>
<comment type="PTM">
    <text evidence="6">Two mature forms are produced by differential two-step proteolytic cleavage (PubMed:26586915). Cleaved by the mitochondrial processing protease to produce the long mature form and subsequently by the mitochondrial intermediate protease to produce the short mature form (PubMed:26586915).</text>
</comment>
<comment type="PTM">
    <text evidence="8">In the presence of CUL3, undergoes 'Lys-63'-linked ubiquitination at Lys-150 which results in proteasomal degradation.</text>
</comment>
<comment type="disease" evidence="5">
    <disease id="DI-05877">
        <name>Combined oxidative phosphorylation deficiency 45</name>
        <acronym>COXPD45</acronym>
        <description>An autosomal recessive mitochondrial disorder with onset in utero and characterized by poor overall growth, failure to thrive, global developmental delay, poor or absent speech, seizures, hypotonia, loss of walking, acute progressive neurologic deterioration, brain lesions, and facial dysmorphism. Laboratory studies show increased serum lactate and decreased mitochondrial respiratory chain enzyme activity in patient tissues.</description>
        <dbReference type="MIM" id="618951"/>
    </disease>
    <text>The disease may be caused by variants affecting the gene represented in this entry.</text>
</comment>
<comment type="miscellaneous">
    <text evidence="8">High-glucose conditions in renal tubular epithelial cells lead to up-regulation of CUL3 expression, significant increase in CUL3-mediated ubiquitination of MRPL12 and dysregulation of mitochondrial biosynthesis.</text>
</comment>
<comment type="similarity">
    <text evidence="13">Belongs to the bacterial ribosomal protein bL12 family.</text>
</comment>
<comment type="sequence caution" evidence="13">
    <conflict type="frameshift">
        <sequence resource="EMBL-CDS" id="AAD16894"/>
    </conflict>
</comment>
<sequence>MLPAAARPLWGPCLGLRAAAFRLARRQVPCVCAVRHMRSSGHQRCEALAGAPLDNAPKEYPPKIQQLVQDIASLTLLEISDLNELLKKTLKIQDVGLVPMGGVMSGAVPAAAAQEAVEEDIPIAKERTHFTVRLTEAKPVDKVKLIKEIKNYIQGINLVQAKKLVESLPQEIKANVAKAEAEKIKAALEAVGGTVVLE</sequence>
<proteinExistence type="evidence at protein level"/>